<proteinExistence type="inferred from homology"/>
<evidence type="ECO:0000255" key="1">
    <source>
        <dbReference type="HAMAP-Rule" id="MF_01512"/>
    </source>
</evidence>
<evidence type="ECO:0000255" key="2">
    <source>
        <dbReference type="PROSITE-ProRule" id="PRU01163"/>
    </source>
</evidence>
<sequence>MENNKILGINHLLFSVSDLSVSISFYEKVFDAKWLVKAEKTAYFDLNGIWLAFNEEKDIKRQEIHDSYTHIAFSIQQEDLPFWEKKLHDLGVNVLKGRKRHEGDRDSIYFSDPDGHKFELHTGSVFDRLQYYQNEKPHLSFHEGHIKALYDRNK</sequence>
<name>FOSB_BACLD</name>
<accession>Q65KJ5</accession>
<organism>
    <name type="scientific">Bacillus licheniformis (strain ATCC 14580 / DSM 13 / JCM 2505 / CCUG 7422 / NBRC 12200 / NCIMB 9375 / NCTC 10341 / NRRL NRS-1264 / Gibson 46)</name>
    <dbReference type="NCBI Taxonomy" id="279010"/>
    <lineage>
        <taxon>Bacteria</taxon>
        <taxon>Bacillati</taxon>
        <taxon>Bacillota</taxon>
        <taxon>Bacilli</taxon>
        <taxon>Bacillales</taxon>
        <taxon>Bacillaceae</taxon>
        <taxon>Bacillus</taxon>
    </lineage>
</organism>
<protein>
    <recommendedName>
        <fullName evidence="1">Metallothiol transferase FosB</fullName>
        <ecNumber evidence="1">2.5.1.-</ecNumber>
    </recommendedName>
    <alternativeName>
        <fullName evidence="1">Fosfomycin resistance protein</fullName>
    </alternativeName>
</protein>
<reference key="1">
    <citation type="journal article" date="2004" name="J. Mol. Microbiol. Biotechnol.">
        <title>The complete genome sequence of Bacillus licheniformis DSM13, an organism with great industrial potential.</title>
        <authorList>
            <person name="Veith B."/>
            <person name="Herzberg C."/>
            <person name="Steckel S."/>
            <person name="Feesche J."/>
            <person name="Maurer K.H."/>
            <person name="Ehrenreich P."/>
            <person name="Baeumer S."/>
            <person name="Henne A."/>
            <person name="Liesegang H."/>
            <person name="Merkl R."/>
            <person name="Ehrenreich A."/>
            <person name="Gottschalk G."/>
        </authorList>
    </citation>
    <scope>NUCLEOTIDE SEQUENCE [LARGE SCALE GENOMIC DNA]</scope>
    <source>
        <strain>ATCC 14580 / DSM 13 / JCM 2505 / CCUG 7422 / NBRC 12200 / NCIMB 9375 / NCTC 10341 / NRRL NRS-1264 / Gibson 46</strain>
    </source>
</reference>
<reference key="2">
    <citation type="journal article" date="2004" name="Genome Biol.">
        <title>Complete genome sequence of the industrial bacterium Bacillus licheniformis and comparisons with closely related Bacillus species.</title>
        <authorList>
            <person name="Rey M.W."/>
            <person name="Ramaiya P."/>
            <person name="Nelson B.A."/>
            <person name="Brody-Karpin S.D."/>
            <person name="Zaretsky E.J."/>
            <person name="Tang M."/>
            <person name="Lopez de Leon A."/>
            <person name="Xiang H."/>
            <person name="Gusti V."/>
            <person name="Clausen I.G."/>
            <person name="Olsen P.B."/>
            <person name="Rasmussen M.D."/>
            <person name="Andersen J.T."/>
            <person name="Joergensen P.L."/>
            <person name="Larsen T.S."/>
            <person name="Sorokin A."/>
            <person name="Bolotin A."/>
            <person name="Lapidus A."/>
            <person name="Galleron N."/>
            <person name="Ehrlich S.D."/>
            <person name="Berka R.M."/>
        </authorList>
    </citation>
    <scope>NUCLEOTIDE SEQUENCE [LARGE SCALE GENOMIC DNA]</scope>
    <source>
        <strain>ATCC 14580 / DSM 13 / JCM 2505 / CCUG 7422 / NBRC 12200 / NCIMB 9375 / NCTC 10341 / NRRL NRS-1264 / Gibson 46</strain>
    </source>
</reference>
<gene>
    <name evidence="1" type="primary">fosB</name>
    <name type="ordered locus">BLi01518</name>
    <name type="ordered locus">BL03635</name>
</gene>
<dbReference type="EC" id="2.5.1.-" evidence="1"/>
<dbReference type="EMBL" id="AE017333">
    <property type="protein sequence ID" value="AAU40419.1"/>
    <property type="molecule type" value="Genomic_DNA"/>
</dbReference>
<dbReference type="EMBL" id="CP000002">
    <property type="protein sequence ID" value="AAU23065.1"/>
    <property type="molecule type" value="Genomic_DNA"/>
</dbReference>
<dbReference type="RefSeq" id="WP_011197891.1">
    <property type="nucleotide sequence ID" value="NC_006322.1"/>
</dbReference>
<dbReference type="SMR" id="Q65KJ5"/>
<dbReference type="STRING" id="279010.BL03635"/>
<dbReference type="GeneID" id="92861891"/>
<dbReference type="KEGG" id="bld:BLi01518"/>
<dbReference type="KEGG" id="bli:BL03635"/>
<dbReference type="PATRIC" id="fig|279010.13.peg.1512"/>
<dbReference type="eggNOG" id="COG0346">
    <property type="taxonomic scope" value="Bacteria"/>
</dbReference>
<dbReference type="HOGENOM" id="CLU_121356_0_0_9"/>
<dbReference type="Proteomes" id="UP000000606">
    <property type="component" value="Chromosome"/>
</dbReference>
<dbReference type="GO" id="GO:0005737">
    <property type="term" value="C:cytoplasm"/>
    <property type="evidence" value="ECO:0007669"/>
    <property type="project" value="UniProtKB-SubCell"/>
</dbReference>
<dbReference type="GO" id="GO:0000287">
    <property type="term" value="F:magnesium ion binding"/>
    <property type="evidence" value="ECO:0007669"/>
    <property type="project" value="UniProtKB-UniRule"/>
</dbReference>
<dbReference type="GO" id="GO:0016765">
    <property type="term" value="F:transferase activity, transferring alkyl or aryl (other than methyl) groups"/>
    <property type="evidence" value="ECO:0007669"/>
    <property type="project" value="UniProtKB-UniRule"/>
</dbReference>
<dbReference type="GO" id="GO:0046677">
    <property type="term" value="P:response to antibiotic"/>
    <property type="evidence" value="ECO:0007669"/>
    <property type="project" value="UniProtKB-UniRule"/>
</dbReference>
<dbReference type="CDD" id="cd08363">
    <property type="entry name" value="FosB"/>
    <property type="match status" value="1"/>
</dbReference>
<dbReference type="Gene3D" id="3.10.180.10">
    <property type="entry name" value="2,3-Dihydroxybiphenyl 1,2-Dioxygenase, domain 1"/>
    <property type="match status" value="1"/>
</dbReference>
<dbReference type="HAMAP" id="MF_01512">
    <property type="entry name" value="FosB"/>
    <property type="match status" value="1"/>
</dbReference>
<dbReference type="InterPro" id="IPR051332">
    <property type="entry name" value="Fosfomycin_Res_Enzymes"/>
</dbReference>
<dbReference type="InterPro" id="IPR029068">
    <property type="entry name" value="Glyas_Bleomycin-R_OHBP_Dase"/>
</dbReference>
<dbReference type="InterPro" id="IPR004360">
    <property type="entry name" value="Glyas_Fos-R_dOase_dom"/>
</dbReference>
<dbReference type="InterPro" id="IPR022858">
    <property type="entry name" value="Metallothiol_Trafse_FosB"/>
</dbReference>
<dbReference type="InterPro" id="IPR037523">
    <property type="entry name" value="VOC"/>
</dbReference>
<dbReference type="NCBIfam" id="NF003152">
    <property type="entry name" value="PRK04101.1"/>
    <property type="match status" value="1"/>
</dbReference>
<dbReference type="PANTHER" id="PTHR36113:SF6">
    <property type="entry name" value="FOSFOMYCIN RESISTANCE PROTEIN FOSX"/>
    <property type="match status" value="1"/>
</dbReference>
<dbReference type="PANTHER" id="PTHR36113">
    <property type="entry name" value="LYASE, PUTATIVE-RELATED-RELATED"/>
    <property type="match status" value="1"/>
</dbReference>
<dbReference type="Pfam" id="PF00903">
    <property type="entry name" value="Glyoxalase"/>
    <property type="match status" value="1"/>
</dbReference>
<dbReference type="SUPFAM" id="SSF54593">
    <property type="entry name" value="Glyoxalase/Bleomycin resistance protein/Dihydroxybiphenyl dioxygenase"/>
    <property type="match status" value="1"/>
</dbReference>
<dbReference type="PROSITE" id="PS51819">
    <property type="entry name" value="VOC"/>
    <property type="match status" value="1"/>
</dbReference>
<keyword id="KW-0046">Antibiotic resistance</keyword>
<keyword id="KW-0963">Cytoplasm</keyword>
<keyword id="KW-0460">Magnesium</keyword>
<keyword id="KW-0479">Metal-binding</keyword>
<keyword id="KW-1185">Reference proteome</keyword>
<keyword id="KW-0808">Transferase</keyword>
<comment type="function">
    <text evidence="1">Metallothiol transferase which confers resistance to fosfomycin by catalyzing the addition of a thiol cofactor to fosfomycin. L-cysteine is probably the physiological thiol donor.</text>
</comment>
<comment type="cofactor">
    <cofactor evidence="1">
        <name>Mg(2+)</name>
        <dbReference type="ChEBI" id="CHEBI:18420"/>
    </cofactor>
</comment>
<comment type="subunit">
    <text evidence="1">Homodimer.</text>
</comment>
<comment type="subcellular location">
    <subcellularLocation>
        <location evidence="1">Cytoplasm</location>
    </subcellularLocation>
</comment>
<comment type="similarity">
    <text evidence="1">Belongs to the fosfomycin resistance protein family. FosB subfamily.</text>
</comment>
<feature type="chain" id="PRO_0000164030" description="Metallothiol transferase FosB">
    <location>
        <begin position="1"/>
        <end position="154"/>
    </location>
</feature>
<feature type="domain" description="VOC" evidence="2">
    <location>
        <begin position="8"/>
        <end position="123"/>
    </location>
</feature>
<feature type="active site" description="Proton donor/acceptor" evidence="2">
    <location>
        <position position="119"/>
    </location>
</feature>
<feature type="binding site" evidence="1">
    <location>
        <position position="11"/>
    </location>
    <ligand>
        <name>Mg(2+)</name>
        <dbReference type="ChEBI" id="CHEBI:18420"/>
    </ligand>
</feature>
<feature type="binding site" evidence="1">
    <location>
        <position position="70"/>
    </location>
    <ligand>
        <name>Mg(2+)</name>
        <dbReference type="ChEBI" id="CHEBI:18420"/>
    </ligand>
</feature>
<feature type="binding site" evidence="1">
    <location>
        <position position="119"/>
    </location>
    <ligand>
        <name>Mg(2+)</name>
        <dbReference type="ChEBI" id="CHEBI:18420"/>
    </ligand>
</feature>